<proteinExistence type="inferred from homology"/>
<name>MURC_COXBU</name>
<reference key="1">
    <citation type="journal article" date="2003" name="Proc. Natl. Acad. Sci. U.S.A.">
        <title>Complete genome sequence of the Q-fever pathogen, Coxiella burnetii.</title>
        <authorList>
            <person name="Seshadri R."/>
            <person name="Paulsen I.T."/>
            <person name="Eisen J.A."/>
            <person name="Read T.D."/>
            <person name="Nelson K.E."/>
            <person name="Nelson W.C."/>
            <person name="Ward N.L."/>
            <person name="Tettelin H."/>
            <person name="Davidsen T.M."/>
            <person name="Beanan M.J."/>
            <person name="DeBoy R.T."/>
            <person name="Daugherty S.C."/>
            <person name="Brinkac L.M."/>
            <person name="Madupu R."/>
            <person name="Dodson R.J."/>
            <person name="Khouri H.M."/>
            <person name="Lee K.H."/>
            <person name="Carty H.A."/>
            <person name="Scanlan D."/>
            <person name="Heinzen R.A."/>
            <person name="Thompson H.A."/>
            <person name="Samuel J.E."/>
            <person name="Fraser C.M."/>
            <person name="Heidelberg J.F."/>
        </authorList>
    </citation>
    <scope>NUCLEOTIDE SEQUENCE [LARGE SCALE GENOMIC DNA]</scope>
    <source>
        <strain>RSA 493 / Nine Mile phase I</strain>
    </source>
</reference>
<accession>Q83F17</accession>
<comment type="function">
    <text evidence="1">Cell wall formation.</text>
</comment>
<comment type="catalytic activity">
    <reaction evidence="1">
        <text>UDP-N-acetyl-alpha-D-muramate + L-alanine + ATP = UDP-N-acetyl-alpha-D-muramoyl-L-alanine + ADP + phosphate + H(+)</text>
        <dbReference type="Rhea" id="RHEA:23372"/>
        <dbReference type="ChEBI" id="CHEBI:15378"/>
        <dbReference type="ChEBI" id="CHEBI:30616"/>
        <dbReference type="ChEBI" id="CHEBI:43474"/>
        <dbReference type="ChEBI" id="CHEBI:57972"/>
        <dbReference type="ChEBI" id="CHEBI:70757"/>
        <dbReference type="ChEBI" id="CHEBI:83898"/>
        <dbReference type="ChEBI" id="CHEBI:456216"/>
        <dbReference type="EC" id="6.3.2.8"/>
    </reaction>
</comment>
<comment type="pathway">
    <text evidence="1">Cell wall biogenesis; peptidoglycan biosynthesis.</text>
</comment>
<comment type="subcellular location">
    <subcellularLocation>
        <location evidence="1">Cytoplasm</location>
    </subcellularLocation>
</comment>
<comment type="similarity">
    <text evidence="1">Belongs to the MurCDEF family.</text>
</comment>
<protein>
    <recommendedName>
        <fullName evidence="1">UDP-N-acetylmuramate--L-alanine ligase</fullName>
        <ecNumber evidence="1">6.3.2.8</ecNumber>
    </recommendedName>
    <alternativeName>
        <fullName evidence="1">UDP-N-acetylmuramoyl-L-alanine synthetase</fullName>
    </alternativeName>
</protein>
<evidence type="ECO:0000255" key="1">
    <source>
        <dbReference type="HAMAP-Rule" id="MF_00046"/>
    </source>
</evidence>
<gene>
    <name evidence="1" type="primary">murC</name>
    <name type="ordered locus">CBU_0136</name>
</gene>
<organism>
    <name type="scientific">Coxiella burnetii (strain RSA 493 / Nine Mile phase I)</name>
    <dbReference type="NCBI Taxonomy" id="227377"/>
    <lineage>
        <taxon>Bacteria</taxon>
        <taxon>Pseudomonadati</taxon>
        <taxon>Pseudomonadota</taxon>
        <taxon>Gammaproteobacteria</taxon>
        <taxon>Legionellales</taxon>
        <taxon>Coxiellaceae</taxon>
        <taxon>Coxiella</taxon>
    </lineage>
</organism>
<dbReference type="EC" id="6.3.2.8" evidence="1"/>
<dbReference type="EMBL" id="AE016828">
    <property type="protein sequence ID" value="AAO89700.1"/>
    <property type="molecule type" value="Genomic_DNA"/>
</dbReference>
<dbReference type="RefSeq" id="NP_819186.1">
    <property type="nucleotide sequence ID" value="NC_002971.4"/>
</dbReference>
<dbReference type="RefSeq" id="WP_010957397.1">
    <property type="nucleotide sequence ID" value="NC_002971.4"/>
</dbReference>
<dbReference type="SMR" id="Q83F17"/>
<dbReference type="STRING" id="227377.CBU_0136"/>
<dbReference type="EnsemblBacteria" id="AAO89700">
    <property type="protein sequence ID" value="AAO89700"/>
    <property type="gene ID" value="CBU_0136"/>
</dbReference>
<dbReference type="GeneID" id="1208007"/>
<dbReference type="KEGG" id="cbu:CBU_0136"/>
<dbReference type="PATRIC" id="fig|227377.7.peg.138"/>
<dbReference type="eggNOG" id="COG0773">
    <property type="taxonomic scope" value="Bacteria"/>
</dbReference>
<dbReference type="HOGENOM" id="CLU_028104_2_2_6"/>
<dbReference type="OrthoDB" id="9804126at2"/>
<dbReference type="UniPathway" id="UPA00219"/>
<dbReference type="Proteomes" id="UP000002671">
    <property type="component" value="Chromosome"/>
</dbReference>
<dbReference type="GO" id="GO:0005737">
    <property type="term" value="C:cytoplasm"/>
    <property type="evidence" value="ECO:0007669"/>
    <property type="project" value="UniProtKB-SubCell"/>
</dbReference>
<dbReference type="GO" id="GO:0005524">
    <property type="term" value="F:ATP binding"/>
    <property type="evidence" value="ECO:0007669"/>
    <property type="project" value="UniProtKB-UniRule"/>
</dbReference>
<dbReference type="GO" id="GO:0008763">
    <property type="term" value="F:UDP-N-acetylmuramate-L-alanine ligase activity"/>
    <property type="evidence" value="ECO:0007669"/>
    <property type="project" value="UniProtKB-UniRule"/>
</dbReference>
<dbReference type="GO" id="GO:0051301">
    <property type="term" value="P:cell division"/>
    <property type="evidence" value="ECO:0007669"/>
    <property type="project" value="UniProtKB-KW"/>
</dbReference>
<dbReference type="GO" id="GO:0071555">
    <property type="term" value="P:cell wall organization"/>
    <property type="evidence" value="ECO:0007669"/>
    <property type="project" value="UniProtKB-KW"/>
</dbReference>
<dbReference type="GO" id="GO:0009252">
    <property type="term" value="P:peptidoglycan biosynthetic process"/>
    <property type="evidence" value="ECO:0007669"/>
    <property type="project" value="UniProtKB-UniRule"/>
</dbReference>
<dbReference type="GO" id="GO:0008360">
    <property type="term" value="P:regulation of cell shape"/>
    <property type="evidence" value="ECO:0007669"/>
    <property type="project" value="UniProtKB-KW"/>
</dbReference>
<dbReference type="Gene3D" id="3.90.190.20">
    <property type="entry name" value="Mur ligase, C-terminal domain"/>
    <property type="match status" value="1"/>
</dbReference>
<dbReference type="Gene3D" id="3.40.1190.10">
    <property type="entry name" value="Mur-like, catalytic domain"/>
    <property type="match status" value="1"/>
</dbReference>
<dbReference type="Gene3D" id="3.40.50.720">
    <property type="entry name" value="NAD(P)-binding Rossmann-like Domain"/>
    <property type="match status" value="1"/>
</dbReference>
<dbReference type="HAMAP" id="MF_00046">
    <property type="entry name" value="MurC"/>
    <property type="match status" value="1"/>
</dbReference>
<dbReference type="InterPro" id="IPR036565">
    <property type="entry name" value="Mur-like_cat_sf"/>
</dbReference>
<dbReference type="InterPro" id="IPR004101">
    <property type="entry name" value="Mur_ligase_C"/>
</dbReference>
<dbReference type="InterPro" id="IPR036615">
    <property type="entry name" value="Mur_ligase_C_dom_sf"/>
</dbReference>
<dbReference type="InterPro" id="IPR013221">
    <property type="entry name" value="Mur_ligase_cen"/>
</dbReference>
<dbReference type="InterPro" id="IPR000713">
    <property type="entry name" value="Mur_ligase_N"/>
</dbReference>
<dbReference type="InterPro" id="IPR050061">
    <property type="entry name" value="MurCDEF_pg_biosynth"/>
</dbReference>
<dbReference type="InterPro" id="IPR005758">
    <property type="entry name" value="UDP-N-AcMur_Ala_ligase_MurC"/>
</dbReference>
<dbReference type="NCBIfam" id="TIGR01082">
    <property type="entry name" value="murC"/>
    <property type="match status" value="1"/>
</dbReference>
<dbReference type="PANTHER" id="PTHR43445:SF3">
    <property type="entry name" value="UDP-N-ACETYLMURAMATE--L-ALANINE LIGASE"/>
    <property type="match status" value="1"/>
</dbReference>
<dbReference type="PANTHER" id="PTHR43445">
    <property type="entry name" value="UDP-N-ACETYLMURAMATE--L-ALANINE LIGASE-RELATED"/>
    <property type="match status" value="1"/>
</dbReference>
<dbReference type="Pfam" id="PF01225">
    <property type="entry name" value="Mur_ligase"/>
    <property type="match status" value="1"/>
</dbReference>
<dbReference type="Pfam" id="PF02875">
    <property type="entry name" value="Mur_ligase_C"/>
    <property type="match status" value="1"/>
</dbReference>
<dbReference type="Pfam" id="PF08245">
    <property type="entry name" value="Mur_ligase_M"/>
    <property type="match status" value="1"/>
</dbReference>
<dbReference type="SUPFAM" id="SSF51984">
    <property type="entry name" value="MurCD N-terminal domain"/>
    <property type="match status" value="1"/>
</dbReference>
<dbReference type="SUPFAM" id="SSF53623">
    <property type="entry name" value="MurD-like peptide ligases, catalytic domain"/>
    <property type="match status" value="1"/>
</dbReference>
<dbReference type="SUPFAM" id="SSF53244">
    <property type="entry name" value="MurD-like peptide ligases, peptide-binding domain"/>
    <property type="match status" value="1"/>
</dbReference>
<keyword id="KW-0067">ATP-binding</keyword>
<keyword id="KW-0131">Cell cycle</keyword>
<keyword id="KW-0132">Cell division</keyword>
<keyword id="KW-0133">Cell shape</keyword>
<keyword id="KW-0961">Cell wall biogenesis/degradation</keyword>
<keyword id="KW-0963">Cytoplasm</keyword>
<keyword id="KW-0436">Ligase</keyword>
<keyword id="KW-0547">Nucleotide-binding</keyword>
<keyword id="KW-0573">Peptidoglycan synthesis</keyword>
<keyword id="KW-1185">Reference proteome</keyword>
<sequence>MQLDKKIINHVHCLGIGGIGVSALAEILLKKGCRVTGSDVSPNKNTERLQRLGAEIIFNHDGTAITQADCAVYSSAIGATNPELMAAKQAKIPLLKRGEMLANLMKEYQSIAVAGAHGKTTTSGMLSHAFVEANLDPTFMVGGVLNNSQTPARVGNGHYFIAEADESDASFLFMHPDIAVVTNIDADHLSTYDGDFNRLKQTYIQFLEQTAQDGVVVLCLDDPILREIAPLLSRRVITYGFSSDAQYRVVDYCQQGIQSLFQIHSPQRKAPLTVKLSMPGQHNALNATAVTAIADVVQMNEPALLKSLADFPGVDRRFTIRGEMILPKGNALIIEDYGHHPNEIKATLAAARAAWPERRMVLVFQPHRYSRTRDLMTEFVSVLAETDWLVLLEVYSAGEMPIPGADGMALIKMMSNGMAQKTTFVPLLQNLPETLQKLSQPNDIIILQGAGNIGSIVTALVQTHG</sequence>
<feature type="chain" id="PRO_0000182085" description="UDP-N-acetylmuramate--L-alanine ligase">
    <location>
        <begin position="1"/>
        <end position="465"/>
    </location>
</feature>
<feature type="binding site" evidence="1">
    <location>
        <begin position="115"/>
        <end position="121"/>
    </location>
    <ligand>
        <name>ATP</name>
        <dbReference type="ChEBI" id="CHEBI:30616"/>
    </ligand>
</feature>